<gene>
    <name evidence="1" type="primary">glyQ</name>
    <name type="ordered locus">spyM18_1701</name>
</gene>
<proteinExistence type="inferred from homology"/>
<sequence length="305" mass="34881">MSKKLTFQEIILTLQQYWNDQGCMLMQAYDNEKGAGTMSPYTFLRAIGPEPWNAAYVEPSRRPADGRYGENPNRLYQHHQFQVVMKPSPSNIQELYLASLEKLGINPLEHDIRFVEDNWENPSTGSAGLGWEVWLDGMEITQFTYFQQVGGLATSPVTAEVTYGLERLASYIQEVDSVYDIEWAPGVKYGEIFLQPEYEHSKYSFEMSDQDMLLENFEKFEKEASRALEEGLVHPAYDYVLKCSHTFNLLDARGAVSVTERTGYIARIRNLARVVAKTFVAERKKLGFPLLDEATRAILLAEDDE</sequence>
<organism>
    <name type="scientific">Streptococcus pyogenes serotype M18 (strain MGAS8232)</name>
    <dbReference type="NCBI Taxonomy" id="186103"/>
    <lineage>
        <taxon>Bacteria</taxon>
        <taxon>Bacillati</taxon>
        <taxon>Bacillota</taxon>
        <taxon>Bacilli</taxon>
        <taxon>Lactobacillales</taxon>
        <taxon>Streptococcaceae</taxon>
        <taxon>Streptococcus</taxon>
    </lineage>
</organism>
<comment type="catalytic activity">
    <reaction evidence="1">
        <text>tRNA(Gly) + glycine + ATP = glycyl-tRNA(Gly) + AMP + diphosphate</text>
        <dbReference type="Rhea" id="RHEA:16013"/>
        <dbReference type="Rhea" id="RHEA-COMP:9664"/>
        <dbReference type="Rhea" id="RHEA-COMP:9683"/>
        <dbReference type="ChEBI" id="CHEBI:30616"/>
        <dbReference type="ChEBI" id="CHEBI:33019"/>
        <dbReference type="ChEBI" id="CHEBI:57305"/>
        <dbReference type="ChEBI" id="CHEBI:78442"/>
        <dbReference type="ChEBI" id="CHEBI:78522"/>
        <dbReference type="ChEBI" id="CHEBI:456215"/>
        <dbReference type="EC" id="6.1.1.14"/>
    </reaction>
</comment>
<comment type="subunit">
    <text evidence="1">Tetramer of two alpha and two beta subunits.</text>
</comment>
<comment type="subcellular location">
    <subcellularLocation>
        <location evidence="1">Cytoplasm</location>
    </subcellularLocation>
</comment>
<comment type="similarity">
    <text evidence="1">Belongs to the class-II aminoacyl-tRNA synthetase family.</text>
</comment>
<reference key="1">
    <citation type="journal article" date="2002" name="Proc. Natl. Acad. Sci. U.S.A.">
        <title>Genome sequence and comparative microarray analysis of serotype M18 group A Streptococcus strains associated with acute rheumatic fever outbreaks.</title>
        <authorList>
            <person name="Smoot J.C."/>
            <person name="Barbian K.D."/>
            <person name="Van Gompel J.J."/>
            <person name="Smoot L.M."/>
            <person name="Chaussee M.S."/>
            <person name="Sylva G.L."/>
            <person name="Sturdevant D.E."/>
            <person name="Ricklefs S.M."/>
            <person name="Porcella S.F."/>
            <person name="Parkins L.D."/>
            <person name="Beres S.B."/>
            <person name="Campbell D.S."/>
            <person name="Smith T.M."/>
            <person name="Zhang Q."/>
            <person name="Kapur V."/>
            <person name="Daly J.A."/>
            <person name="Veasy L.G."/>
            <person name="Musser J.M."/>
        </authorList>
    </citation>
    <scope>NUCLEOTIDE SEQUENCE [LARGE SCALE GENOMIC DNA]</scope>
    <source>
        <strain>MGAS8232</strain>
    </source>
</reference>
<name>SYGA_STRP8</name>
<dbReference type="EC" id="6.1.1.14" evidence="1"/>
<dbReference type="EMBL" id="AE009949">
    <property type="protein sequence ID" value="AAL98235.1"/>
    <property type="molecule type" value="Genomic_DNA"/>
</dbReference>
<dbReference type="RefSeq" id="WP_011018087.1">
    <property type="nucleotide sequence ID" value="NC_003485.1"/>
</dbReference>
<dbReference type="SMR" id="Q8NZW6"/>
<dbReference type="KEGG" id="spm:spyM18_1701"/>
<dbReference type="HOGENOM" id="CLU_057066_1_0_9"/>
<dbReference type="GO" id="GO:0005829">
    <property type="term" value="C:cytosol"/>
    <property type="evidence" value="ECO:0007669"/>
    <property type="project" value="TreeGrafter"/>
</dbReference>
<dbReference type="GO" id="GO:0005524">
    <property type="term" value="F:ATP binding"/>
    <property type="evidence" value="ECO:0007669"/>
    <property type="project" value="UniProtKB-UniRule"/>
</dbReference>
<dbReference type="GO" id="GO:0140096">
    <property type="term" value="F:catalytic activity, acting on a protein"/>
    <property type="evidence" value="ECO:0007669"/>
    <property type="project" value="UniProtKB-ARBA"/>
</dbReference>
<dbReference type="GO" id="GO:0004820">
    <property type="term" value="F:glycine-tRNA ligase activity"/>
    <property type="evidence" value="ECO:0007669"/>
    <property type="project" value="UniProtKB-UniRule"/>
</dbReference>
<dbReference type="GO" id="GO:0016740">
    <property type="term" value="F:transferase activity"/>
    <property type="evidence" value="ECO:0007669"/>
    <property type="project" value="UniProtKB-ARBA"/>
</dbReference>
<dbReference type="GO" id="GO:0006426">
    <property type="term" value="P:glycyl-tRNA aminoacylation"/>
    <property type="evidence" value="ECO:0007669"/>
    <property type="project" value="UniProtKB-UniRule"/>
</dbReference>
<dbReference type="CDD" id="cd00733">
    <property type="entry name" value="GlyRS_alpha_core"/>
    <property type="match status" value="1"/>
</dbReference>
<dbReference type="FunFam" id="3.30.930.10:FF:000006">
    <property type="entry name" value="Glycine--tRNA ligase alpha subunit"/>
    <property type="match status" value="1"/>
</dbReference>
<dbReference type="Gene3D" id="3.30.930.10">
    <property type="entry name" value="Bira Bifunctional Protein, Domain 2"/>
    <property type="match status" value="1"/>
</dbReference>
<dbReference type="Gene3D" id="1.20.58.180">
    <property type="entry name" value="Class II aaRS and biotin synthetases, domain 2"/>
    <property type="match status" value="1"/>
</dbReference>
<dbReference type="HAMAP" id="MF_00254">
    <property type="entry name" value="Gly_tRNA_synth_alpha"/>
    <property type="match status" value="1"/>
</dbReference>
<dbReference type="InterPro" id="IPR045864">
    <property type="entry name" value="aa-tRNA-synth_II/BPL/LPL"/>
</dbReference>
<dbReference type="InterPro" id="IPR006194">
    <property type="entry name" value="Gly-tRNA-synth_heterodimer"/>
</dbReference>
<dbReference type="InterPro" id="IPR002310">
    <property type="entry name" value="Gly-tRNA_ligase_asu"/>
</dbReference>
<dbReference type="NCBIfam" id="TIGR00388">
    <property type="entry name" value="glyQ"/>
    <property type="match status" value="1"/>
</dbReference>
<dbReference type="NCBIfam" id="NF006827">
    <property type="entry name" value="PRK09348.1"/>
    <property type="match status" value="1"/>
</dbReference>
<dbReference type="PANTHER" id="PTHR30075:SF2">
    <property type="entry name" value="GLYCINE--TRNA LIGASE, CHLOROPLASTIC_MITOCHONDRIAL 2"/>
    <property type="match status" value="1"/>
</dbReference>
<dbReference type="PANTHER" id="PTHR30075">
    <property type="entry name" value="GLYCYL-TRNA SYNTHETASE"/>
    <property type="match status" value="1"/>
</dbReference>
<dbReference type="Pfam" id="PF02091">
    <property type="entry name" value="tRNA-synt_2e"/>
    <property type="match status" value="1"/>
</dbReference>
<dbReference type="PRINTS" id="PR01044">
    <property type="entry name" value="TRNASYNTHGA"/>
</dbReference>
<dbReference type="SUPFAM" id="SSF55681">
    <property type="entry name" value="Class II aaRS and biotin synthetases"/>
    <property type="match status" value="1"/>
</dbReference>
<dbReference type="PROSITE" id="PS50861">
    <property type="entry name" value="AA_TRNA_LIGASE_II_GLYAB"/>
    <property type="match status" value="1"/>
</dbReference>
<keyword id="KW-0030">Aminoacyl-tRNA synthetase</keyword>
<keyword id="KW-0067">ATP-binding</keyword>
<keyword id="KW-0963">Cytoplasm</keyword>
<keyword id="KW-0436">Ligase</keyword>
<keyword id="KW-0547">Nucleotide-binding</keyword>
<keyword id="KW-0648">Protein biosynthesis</keyword>
<accession>Q8NZW6</accession>
<feature type="chain" id="PRO_0000072874" description="Glycine--tRNA ligase alpha subunit">
    <location>
        <begin position="1"/>
        <end position="305"/>
    </location>
</feature>
<evidence type="ECO:0000255" key="1">
    <source>
        <dbReference type="HAMAP-Rule" id="MF_00254"/>
    </source>
</evidence>
<protein>
    <recommendedName>
        <fullName evidence="1">Glycine--tRNA ligase alpha subunit</fullName>
        <ecNumber evidence="1">6.1.1.14</ecNumber>
    </recommendedName>
    <alternativeName>
        <fullName evidence="1">Glycyl-tRNA synthetase alpha subunit</fullName>
        <shortName evidence="1">GlyRS</shortName>
    </alternativeName>
</protein>